<gene>
    <name evidence="1" type="primary">pnp</name>
    <name type="ordered locus">PMM1191</name>
</gene>
<evidence type="ECO:0000255" key="1">
    <source>
        <dbReference type="HAMAP-Rule" id="MF_01595"/>
    </source>
</evidence>
<protein>
    <recommendedName>
        <fullName evidence="1">Polyribonucleotide nucleotidyltransferase</fullName>
        <ecNumber evidence="1">2.7.7.8</ecNumber>
    </recommendedName>
    <alternativeName>
        <fullName evidence="1">Polynucleotide phosphorylase</fullName>
        <shortName evidence="1">PNPase</shortName>
    </alternativeName>
</protein>
<keyword id="KW-0963">Cytoplasm</keyword>
<keyword id="KW-0460">Magnesium</keyword>
<keyword id="KW-0479">Metal-binding</keyword>
<keyword id="KW-0548">Nucleotidyltransferase</keyword>
<keyword id="KW-0694">RNA-binding</keyword>
<keyword id="KW-0808">Transferase</keyword>
<sequence length="721" mass="78668">MEGKNTSITFDGREIRLTTGLYAPQAGGAVMIECGDTSLLVTATKTTKKQAADFLPLICDYEEKLYAAGRIPGGFMRREGRPPERATLIARLIDRPMRPLFPSWMRDEIQIVASCLSLDERVPADVLGVTGASIATLLAEIPFYGPMAAVRVGLIGDDFILNPSYREIEKGDLDIVVAGSPEGIVMIEAGANQLSEQDTIEAIDFGYEAVSELIKAQENLLKDLGIKQVKPLEPEEDKALATYLEKNCTKPIDLILKKFDQSKEERDLELDKIELEVQTKIDSLKDDNQLKVLTSENEKLIHSDFKKLTKKLMRSQIINEGKRVDGRDLDEVRKISASAGILPKRVHGSALFQRGLTQVLSTTTLGTPSDAQEMDDLNPSTEKTYLHHYNFPPYSVGETRPMRTPGRREIGHGALAERAITPVLPGKETFPYVLRVVSEVLSSNGSTSMGSVCGSTLSLLDAGVPLKAPVSGTAMGLIKEGKEVRILTDIQGIEDFLGDMDFKVAGTEKGITALQMDMKITGLPVSVISDAIKKARPARLHILEKMQEAIDKPQESLSPHAPRLLSFRIDPELIGTVIGPGGRTIKGITERTNTKIDIEDGGIVTIASHDGAAAEEAQKIIEGLTRKVHEGEIFPGVVTRIIPIGAFVEILPGKEGMVHISQLSEARVERVEDVVRQGDEVTVRVREIDSRGRINLTLRGVAQNGGMSYPEPTPTPVAPLN</sequence>
<name>PNP_PROMP</name>
<proteinExistence type="inferred from homology"/>
<accession>Q7V0R5</accession>
<dbReference type="EC" id="2.7.7.8" evidence="1"/>
<dbReference type="EMBL" id="BX548174">
    <property type="protein sequence ID" value="CAE19650.1"/>
    <property type="molecule type" value="Genomic_DNA"/>
</dbReference>
<dbReference type="RefSeq" id="WP_011132825.1">
    <property type="nucleotide sequence ID" value="NC_005072.1"/>
</dbReference>
<dbReference type="SMR" id="Q7V0R5"/>
<dbReference type="STRING" id="59919.PMM1191"/>
<dbReference type="KEGG" id="pmm:PMM1191"/>
<dbReference type="eggNOG" id="COG1185">
    <property type="taxonomic scope" value="Bacteria"/>
</dbReference>
<dbReference type="HOGENOM" id="CLU_004217_2_2_3"/>
<dbReference type="OrthoDB" id="9804305at2"/>
<dbReference type="Proteomes" id="UP000001026">
    <property type="component" value="Chromosome"/>
</dbReference>
<dbReference type="GO" id="GO:0005829">
    <property type="term" value="C:cytosol"/>
    <property type="evidence" value="ECO:0007669"/>
    <property type="project" value="TreeGrafter"/>
</dbReference>
<dbReference type="GO" id="GO:0000175">
    <property type="term" value="F:3'-5'-RNA exonuclease activity"/>
    <property type="evidence" value="ECO:0007669"/>
    <property type="project" value="TreeGrafter"/>
</dbReference>
<dbReference type="GO" id="GO:0000287">
    <property type="term" value="F:magnesium ion binding"/>
    <property type="evidence" value="ECO:0007669"/>
    <property type="project" value="UniProtKB-UniRule"/>
</dbReference>
<dbReference type="GO" id="GO:0004654">
    <property type="term" value="F:polyribonucleotide nucleotidyltransferase activity"/>
    <property type="evidence" value="ECO:0007669"/>
    <property type="project" value="UniProtKB-UniRule"/>
</dbReference>
<dbReference type="GO" id="GO:0003723">
    <property type="term" value="F:RNA binding"/>
    <property type="evidence" value="ECO:0007669"/>
    <property type="project" value="UniProtKB-UniRule"/>
</dbReference>
<dbReference type="GO" id="GO:0006402">
    <property type="term" value="P:mRNA catabolic process"/>
    <property type="evidence" value="ECO:0007669"/>
    <property type="project" value="UniProtKB-UniRule"/>
</dbReference>
<dbReference type="GO" id="GO:0006396">
    <property type="term" value="P:RNA processing"/>
    <property type="evidence" value="ECO:0007669"/>
    <property type="project" value="InterPro"/>
</dbReference>
<dbReference type="CDD" id="cd02393">
    <property type="entry name" value="KH-I_PNPase"/>
    <property type="match status" value="1"/>
</dbReference>
<dbReference type="CDD" id="cd11363">
    <property type="entry name" value="RNase_PH_PNPase_1"/>
    <property type="match status" value="1"/>
</dbReference>
<dbReference type="CDD" id="cd11364">
    <property type="entry name" value="RNase_PH_PNPase_2"/>
    <property type="match status" value="1"/>
</dbReference>
<dbReference type="CDD" id="cd04472">
    <property type="entry name" value="S1_PNPase"/>
    <property type="match status" value="1"/>
</dbReference>
<dbReference type="FunFam" id="3.30.1370.10:FF:000001">
    <property type="entry name" value="Polyribonucleotide nucleotidyltransferase"/>
    <property type="match status" value="1"/>
</dbReference>
<dbReference type="FunFam" id="3.30.230.70:FF:000001">
    <property type="entry name" value="Polyribonucleotide nucleotidyltransferase"/>
    <property type="match status" value="1"/>
</dbReference>
<dbReference type="FunFam" id="3.30.230.70:FF:000002">
    <property type="entry name" value="Polyribonucleotide nucleotidyltransferase"/>
    <property type="match status" value="1"/>
</dbReference>
<dbReference type="Gene3D" id="3.30.230.70">
    <property type="entry name" value="GHMP Kinase, N-terminal domain"/>
    <property type="match status" value="2"/>
</dbReference>
<dbReference type="Gene3D" id="3.30.1370.10">
    <property type="entry name" value="K Homology domain, type 1"/>
    <property type="match status" value="1"/>
</dbReference>
<dbReference type="Gene3D" id="2.40.50.140">
    <property type="entry name" value="Nucleic acid-binding proteins"/>
    <property type="match status" value="1"/>
</dbReference>
<dbReference type="HAMAP" id="MF_01595">
    <property type="entry name" value="PNPase"/>
    <property type="match status" value="1"/>
</dbReference>
<dbReference type="InterPro" id="IPR001247">
    <property type="entry name" value="ExoRNase_PH_dom1"/>
</dbReference>
<dbReference type="InterPro" id="IPR015847">
    <property type="entry name" value="ExoRNase_PH_dom2"/>
</dbReference>
<dbReference type="InterPro" id="IPR036345">
    <property type="entry name" value="ExoRNase_PH_dom2_sf"/>
</dbReference>
<dbReference type="InterPro" id="IPR004087">
    <property type="entry name" value="KH_dom"/>
</dbReference>
<dbReference type="InterPro" id="IPR004088">
    <property type="entry name" value="KH_dom_type_1"/>
</dbReference>
<dbReference type="InterPro" id="IPR036612">
    <property type="entry name" value="KH_dom_type_1_sf"/>
</dbReference>
<dbReference type="InterPro" id="IPR012340">
    <property type="entry name" value="NA-bd_OB-fold"/>
</dbReference>
<dbReference type="InterPro" id="IPR012162">
    <property type="entry name" value="PNPase"/>
</dbReference>
<dbReference type="InterPro" id="IPR027408">
    <property type="entry name" value="PNPase/RNase_PH_dom_sf"/>
</dbReference>
<dbReference type="InterPro" id="IPR015848">
    <property type="entry name" value="PNPase_PH_RNA-bd_bac/org-type"/>
</dbReference>
<dbReference type="InterPro" id="IPR020568">
    <property type="entry name" value="Ribosomal_Su5_D2-typ_SF"/>
</dbReference>
<dbReference type="InterPro" id="IPR003029">
    <property type="entry name" value="S1_domain"/>
</dbReference>
<dbReference type="NCBIfam" id="TIGR03591">
    <property type="entry name" value="polynuc_phos"/>
    <property type="match status" value="1"/>
</dbReference>
<dbReference type="NCBIfam" id="NF008805">
    <property type="entry name" value="PRK11824.1"/>
    <property type="match status" value="1"/>
</dbReference>
<dbReference type="PANTHER" id="PTHR11252">
    <property type="entry name" value="POLYRIBONUCLEOTIDE NUCLEOTIDYLTRANSFERASE"/>
    <property type="match status" value="1"/>
</dbReference>
<dbReference type="PANTHER" id="PTHR11252:SF0">
    <property type="entry name" value="POLYRIBONUCLEOTIDE NUCLEOTIDYLTRANSFERASE 1, MITOCHONDRIAL"/>
    <property type="match status" value="1"/>
</dbReference>
<dbReference type="Pfam" id="PF00013">
    <property type="entry name" value="KH_1"/>
    <property type="match status" value="1"/>
</dbReference>
<dbReference type="Pfam" id="PF03726">
    <property type="entry name" value="PNPase"/>
    <property type="match status" value="1"/>
</dbReference>
<dbReference type="Pfam" id="PF01138">
    <property type="entry name" value="RNase_PH"/>
    <property type="match status" value="2"/>
</dbReference>
<dbReference type="Pfam" id="PF03725">
    <property type="entry name" value="RNase_PH_C"/>
    <property type="match status" value="1"/>
</dbReference>
<dbReference type="Pfam" id="PF00575">
    <property type="entry name" value="S1"/>
    <property type="match status" value="1"/>
</dbReference>
<dbReference type="PIRSF" id="PIRSF005499">
    <property type="entry name" value="PNPase"/>
    <property type="match status" value="1"/>
</dbReference>
<dbReference type="SMART" id="SM00322">
    <property type="entry name" value="KH"/>
    <property type="match status" value="1"/>
</dbReference>
<dbReference type="SMART" id="SM00316">
    <property type="entry name" value="S1"/>
    <property type="match status" value="1"/>
</dbReference>
<dbReference type="SUPFAM" id="SSF54791">
    <property type="entry name" value="Eukaryotic type KH-domain (KH-domain type I)"/>
    <property type="match status" value="1"/>
</dbReference>
<dbReference type="SUPFAM" id="SSF50249">
    <property type="entry name" value="Nucleic acid-binding proteins"/>
    <property type="match status" value="1"/>
</dbReference>
<dbReference type="SUPFAM" id="SSF55666">
    <property type="entry name" value="Ribonuclease PH domain 2-like"/>
    <property type="match status" value="2"/>
</dbReference>
<dbReference type="SUPFAM" id="SSF54211">
    <property type="entry name" value="Ribosomal protein S5 domain 2-like"/>
    <property type="match status" value="2"/>
</dbReference>
<dbReference type="PROSITE" id="PS50084">
    <property type="entry name" value="KH_TYPE_1"/>
    <property type="match status" value="1"/>
</dbReference>
<dbReference type="PROSITE" id="PS50126">
    <property type="entry name" value="S1"/>
    <property type="match status" value="1"/>
</dbReference>
<organism>
    <name type="scientific">Prochlorococcus marinus subsp. pastoris (strain CCMP1986 / NIES-2087 / MED4)</name>
    <dbReference type="NCBI Taxonomy" id="59919"/>
    <lineage>
        <taxon>Bacteria</taxon>
        <taxon>Bacillati</taxon>
        <taxon>Cyanobacteriota</taxon>
        <taxon>Cyanophyceae</taxon>
        <taxon>Synechococcales</taxon>
        <taxon>Prochlorococcaceae</taxon>
        <taxon>Prochlorococcus</taxon>
    </lineage>
</organism>
<reference key="1">
    <citation type="journal article" date="2003" name="Nature">
        <title>Genome divergence in two Prochlorococcus ecotypes reflects oceanic niche differentiation.</title>
        <authorList>
            <person name="Rocap G."/>
            <person name="Larimer F.W."/>
            <person name="Lamerdin J.E."/>
            <person name="Malfatti S."/>
            <person name="Chain P."/>
            <person name="Ahlgren N.A."/>
            <person name="Arellano A."/>
            <person name="Coleman M."/>
            <person name="Hauser L."/>
            <person name="Hess W.R."/>
            <person name="Johnson Z.I."/>
            <person name="Land M.L."/>
            <person name="Lindell D."/>
            <person name="Post A.F."/>
            <person name="Regala W."/>
            <person name="Shah M."/>
            <person name="Shaw S.L."/>
            <person name="Steglich C."/>
            <person name="Sullivan M.B."/>
            <person name="Ting C.S."/>
            <person name="Tolonen A."/>
            <person name="Webb E.A."/>
            <person name="Zinser E.R."/>
            <person name="Chisholm S.W."/>
        </authorList>
    </citation>
    <scope>NUCLEOTIDE SEQUENCE [LARGE SCALE GENOMIC DNA]</scope>
    <source>
        <strain>CCMP1986 / NIES-2087 / MED4</strain>
    </source>
</reference>
<feature type="chain" id="PRO_0000329773" description="Polyribonucleotide nucleotidyltransferase">
    <location>
        <begin position="1"/>
        <end position="721"/>
    </location>
</feature>
<feature type="domain" description="KH" evidence="1">
    <location>
        <begin position="562"/>
        <end position="621"/>
    </location>
</feature>
<feature type="domain" description="S1 motif" evidence="1">
    <location>
        <begin position="631"/>
        <end position="699"/>
    </location>
</feature>
<feature type="binding site" evidence="1">
    <location>
        <position position="495"/>
    </location>
    <ligand>
        <name>Mg(2+)</name>
        <dbReference type="ChEBI" id="CHEBI:18420"/>
    </ligand>
</feature>
<feature type="binding site" evidence="1">
    <location>
        <position position="501"/>
    </location>
    <ligand>
        <name>Mg(2+)</name>
        <dbReference type="ChEBI" id="CHEBI:18420"/>
    </ligand>
</feature>
<comment type="function">
    <text evidence="1">Involved in mRNA degradation. Catalyzes the phosphorolysis of single-stranded polyribonucleotides processively in the 3'- to 5'-direction.</text>
</comment>
<comment type="catalytic activity">
    <reaction evidence="1">
        <text>RNA(n+1) + phosphate = RNA(n) + a ribonucleoside 5'-diphosphate</text>
        <dbReference type="Rhea" id="RHEA:22096"/>
        <dbReference type="Rhea" id="RHEA-COMP:14527"/>
        <dbReference type="Rhea" id="RHEA-COMP:17342"/>
        <dbReference type="ChEBI" id="CHEBI:43474"/>
        <dbReference type="ChEBI" id="CHEBI:57930"/>
        <dbReference type="ChEBI" id="CHEBI:140395"/>
        <dbReference type="EC" id="2.7.7.8"/>
    </reaction>
</comment>
<comment type="cofactor">
    <cofactor evidence="1">
        <name>Mg(2+)</name>
        <dbReference type="ChEBI" id="CHEBI:18420"/>
    </cofactor>
</comment>
<comment type="subcellular location">
    <subcellularLocation>
        <location evidence="1">Cytoplasm</location>
    </subcellularLocation>
</comment>
<comment type="similarity">
    <text evidence="1">Belongs to the polyribonucleotide nucleotidyltransferase family.</text>
</comment>